<accession>Q8HW98</accession>
<accession>A7E1X9</accession>
<gene>
    <name type="primary">Iglon5</name>
</gene>
<keyword id="KW-1015">Disulfide bond</keyword>
<keyword id="KW-0325">Glycoprotein</keyword>
<keyword id="KW-0393">Immunoglobulin domain</keyword>
<keyword id="KW-1185">Reference proteome</keyword>
<keyword id="KW-0677">Repeat</keyword>
<keyword id="KW-0964">Secreted</keyword>
<keyword id="KW-0732">Signal</keyword>
<evidence type="ECO:0000255" key="1"/>
<evidence type="ECO:0000255" key="2">
    <source>
        <dbReference type="PROSITE-ProRule" id="PRU00114"/>
    </source>
</evidence>
<evidence type="ECO:0000305" key="3"/>
<protein>
    <recommendedName>
        <fullName>IgLON family member 5</fullName>
    </recommendedName>
</protein>
<reference key="1">
    <citation type="journal article" date="2009" name="PLoS Biol.">
        <title>Lineage-specific biology revealed by a finished genome assembly of the mouse.</title>
        <authorList>
            <person name="Church D.M."/>
            <person name="Goodstadt L."/>
            <person name="Hillier L.W."/>
            <person name="Zody M.C."/>
            <person name="Goldstein S."/>
            <person name="She X."/>
            <person name="Bult C.J."/>
            <person name="Agarwala R."/>
            <person name="Cherry J.L."/>
            <person name="DiCuccio M."/>
            <person name="Hlavina W."/>
            <person name="Kapustin Y."/>
            <person name="Meric P."/>
            <person name="Maglott D."/>
            <person name="Birtle Z."/>
            <person name="Marques A.C."/>
            <person name="Graves T."/>
            <person name="Zhou S."/>
            <person name="Teague B."/>
            <person name="Potamousis K."/>
            <person name="Churas C."/>
            <person name="Place M."/>
            <person name="Herschleb J."/>
            <person name="Runnheim R."/>
            <person name="Forrest D."/>
            <person name="Amos-Landgraf J."/>
            <person name="Schwartz D.C."/>
            <person name="Cheng Z."/>
            <person name="Lindblad-Toh K."/>
            <person name="Eichler E.E."/>
            <person name="Ponting C.P."/>
        </authorList>
    </citation>
    <scope>NUCLEOTIDE SEQUENCE [LARGE SCALE GENOMIC DNA]</scope>
    <source>
        <strain>C57BL/6J</strain>
    </source>
</reference>
<reference key="2">
    <citation type="journal article" date="2005" name="Science">
        <title>The transcriptional landscape of the mammalian genome.</title>
        <authorList>
            <person name="Carninci P."/>
            <person name="Kasukawa T."/>
            <person name="Katayama S."/>
            <person name="Gough J."/>
            <person name="Frith M.C."/>
            <person name="Maeda N."/>
            <person name="Oyama R."/>
            <person name="Ravasi T."/>
            <person name="Lenhard B."/>
            <person name="Wells C."/>
            <person name="Kodzius R."/>
            <person name="Shimokawa K."/>
            <person name="Bajic V.B."/>
            <person name="Brenner S.E."/>
            <person name="Batalov S."/>
            <person name="Forrest A.R."/>
            <person name="Zavolan M."/>
            <person name="Davis M.J."/>
            <person name="Wilming L.G."/>
            <person name="Aidinis V."/>
            <person name="Allen J.E."/>
            <person name="Ambesi-Impiombato A."/>
            <person name="Apweiler R."/>
            <person name="Aturaliya R.N."/>
            <person name="Bailey T.L."/>
            <person name="Bansal M."/>
            <person name="Baxter L."/>
            <person name="Beisel K.W."/>
            <person name="Bersano T."/>
            <person name="Bono H."/>
            <person name="Chalk A.M."/>
            <person name="Chiu K.P."/>
            <person name="Choudhary V."/>
            <person name="Christoffels A."/>
            <person name="Clutterbuck D.R."/>
            <person name="Crowe M.L."/>
            <person name="Dalla E."/>
            <person name="Dalrymple B.P."/>
            <person name="de Bono B."/>
            <person name="Della Gatta G."/>
            <person name="di Bernardo D."/>
            <person name="Down T."/>
            <person name="Engstrom P."/>
            <person name="Fagiolini M."/>
            <person name="Faulkner G."/>
            <person name="Fletcher C.F."/>
            <person name="Fukushima T."/>
            <person name="Furuno M."/>
            <person name="Futaki S."/>
            <person name="Gariboldi M."/>
            <person name="Georgii-Hemming P."/>
            <person name="Gingeras T.R."/>
            <person name="Gojobori T."/>
            <person name="Green R.E."/>
            <person name="Gustincich S."/>
            <person name="Harbers M."/>
            <person name="Hayashi Y."/>
            <person name="Hensch T.K."/>
            <person name="Hirokawa N."/>
            <person name="Hill D."/>
            <person name="Huminiecki L."/>
            <person name="Iacono M."/>
            <person name="Ikeo K."/>
            <person name="Iwama A."/>
            <person name="Ishikawa T."/>
            <person name="Jakt M."/>
            <person name="Kanapin A."/>
            <person name="Katoh M."/>
            <person name="Kawasawa Y."/>
            <person name="Kelso J."/>
            <person name="Kitamura H."/>
            <person name="Kitano H."/>
            <person name="Kollias G."/>
            <person name="Krishnan S.P."/>
            <person name="Kruger A."/>
            <person name="Kummerfeld S.K."/>
            <person name="Kurochkin I.V."/>
            <person name="Lareau L.F."/>
            <person name="Lazarevic D."/>
            <person name="Lipovich L."/>
            <person name="Liu J."/>
            <person name="Liuni S."/>
            <person name="McWilliam S."/>
            <person name="Madan Babu M."/>
            <person name="Madera M."/>
            <person name="Marchionni L."/>
            <person name="Matsuda H."/>
            <person name="Matsuzawa S."/>
            <person name="Miki H."/>
            <person name="Mignone F."/>
            <person name="Miyake S."/>
            <person name="Morris K."/>
            <person name="Mottagui-Tabar S."/>
            <person name="Mulder N."/>
            <person name="Nakano N."/>
            <person name="Nakauchi H."/>
            <person name="Ng P."/>
            <person name="Nilsson R."/>
            <person name="Nishiguchi S."/>
            <person name="Nishikawa S."/>
            <person name="Nori F."/>
            <person name="Ohara O."/>
            <person name="Okazaki Y."/>
            <person name="Orlando V."/>
            <person name="Pang K.C."/>
            <person name="Pavan W.J."/>
            <person name="Pavesi G."/>
            <person name="Pesole G."/>
            <person name="Petrovsky N."/>
            <person name="Piazza S."/>
            <person name="Reed J."/>
            <person name="Reid J.F."/>
            <person name="Ring B.Z."/>
            <person name="Ringwald M."/>
            <person name="Rost B."/>
            <person name="Ruan Y."/>
            <person name="Salzberg S.L."/>
            <person name="Sandelin A."/>
            <person name="Schneider C."/>
            <person name="Schoenbach C."/>
            <person name="Sekiguchi K."/>
            <person name="Semple C.A."/>
            <person name="Seno S."/>
            <person name="Sessa L."/>
            <person name="Sheng Y."/>
            <person name="Shibata Y."/>
            <person name="Shimada H."/>
            <person name="Shimada K."/>
            <person name="Silva D."/>
            <person name="Sinclair B."/>
            <person name="Sperling S."/>
            <person name="Stupka E."/>
            <person name="Sugiura K."/>
            <person name="Sultana R."/>
            <person name="Takenaka Y."/>
            <person name="Taki K."/>
            <person name="Tammoja K."/>
            <person name="Tan S.L."/>
            <person name="Tang S."/>
            <person name="Taylor M.S."/>
            <person name="Tegner J."/>
            <person name="Teichmann S.A."/>
            <person name="Ueda H.R."/>
            <person name="van Nimwegen E."/>
            <person name="Verardo R."/>
            <person name="Wei C.L."/>
            <person name="Yagi K."/>
            <person name="Yamanishi H."/>
            <person name="Zabarovsky E."/>
            <person name="Zhu S."/>
            <person name="Zimmer A."/>
            <person name="Hide W."/>
            <person name="Bult C."/>
            <person name="Grimmond S.M."/>
            <person name="Teasdale R.D."/>
            <person name="Liu E.T."/>
            <person name="Brusic V."/>
            <person name="Quackenbush J."/>
            <person name="Wahlestedt C."/>
            <person name="Mattick J.S."/>
            <person name="Hume D.A."/>
            <person name="Kai C."/>
            <person name="Sasaki D."/>
            <person name="Tomaru Y."/>
            <person name="Fukuda S."/>
            <person name="Kanamori-Katayama M."/>
            <person name="Suzuki M."/>
            <person name="Aoki J."/>
            <person name="Arakawa T."/>
            <person name="Iida J."/>
            <person name="Imamura K."/>
            <person name="Itoh M."/>
            <person name="Kato T."/>
            <person name="Kawaji H."/>
            <person name="Kawagashira N."/>
            <person name="Kawashima T."/>
            <person name="Kojima M."/>
            <person name="Kondo S."/>
            <person name="Konno H."/>
            <person name="Nakano K."/>
            <person name="Ninomiya N."/>
            <person name="Nishio T."/>
            <person name="Okada M."/>
            <person name="Plessy C."/>
            <person name="Shibata K."/>
            <person name="Shiraki T."/>
            <person name="Suzuki S."/>
            <person name="Tagami M."/>
            <person name="Waki K."/>
            <person name="Watahiki A."/>
            <person name="Okamura-Oho Y."/>
            <person name="Suzuki H."/>
            <person name="Kawai J."/>
            <person name="Hayashizaki Y."/>
        </authorList>
    </citation>
    <scope>NUCLEOTIDE SEQUENCE [LARGE SCALE MRNA] OF 12-336</scope>
    <source>
        <strain>C57BL/6J</strain>
        <tissue>Hypothalamus</tissue>
    </source>
</reference>
<reference key="3">
    <citation type="journal article" date="2004" name="Genome Res.">
        <title>The status, quality, and expansion of the NIH full-length cDNA project: the Mammalian Gene Collection (MGC).</title>
        <authorList>
            <consortium name="The MGC Project Team"/>
        </authorList>
    </citation>
    <scope>NUCLEOTIDE SEQUENCE [LARGE SCALE MRNA] OF 140-336</scope>
</reference>
<sequence length="336" mass="36767">MPPPAPGARLRLLAAAALAGLAVISRGLLSQSLEFSSPADNYTVCEGDNATLSCFIDEHVTRVAWLNRSNILYAGNDRWTSDPRVRLLINTPEEFSILITQVGLGDEGLYTCSFQTRHQPYTTQVYLIVHVPARIVNISSPVAVNEGGNVNLLCLAVGRPEPTVTWRQLRDGFTSEGEILEISDIQRGQAGEYECVTHNGVNSAPDSRRVLVTVNYPPTITDVTSARTALGRAALLRCEAMAVPPADFQWYKDDRLLSSGSAEGLKVQTERTRSMLLFANVSARHYGNYTCRAANRLGASSASMRLLRPGSLENSAPRPPGPLTLLSALSWLWWRM</sequence>
<name>IGLO5_MOUSE</name>
<comment type="subcellular location">
    <subcellularLocation>
        <location evidence="3">Secreted</location>
    </subcellularLocation>
</comment>
<comment type="similarity">
    <text evidence="3">Belongs to the immunoglobulin superfamily. IgLON family.</text>
</comment>
<organism>
    <name type="scientific">Mus musculus</name>
    <name type="common">Mouse</name>
    <dbReference type="NCBI Taxonomy" id="10090"/>
    <lineage>
        <taxon>Eukaryota</taxon>
        <taxon>Metazoa</taxon>
        <taxon>Chordata</taxon>
        <taxon>Craniata</taxon>
        <taxon>Vertebrata</taxon>
        <taxon>Euteleostomi</taxon>
        <taxon>Mammalia</taxon>
        <taxon>Eutheria</taxon>
        <taxon>Euarchontoglires</taxon>
        <taxon>Glires</taxon>
        <taxon>Rodentia</taxon>
        <taxon>Myomorpha</taxon>
        <taxon>Muroidea</taxon>
        <taxon>Muridae</taxon>
        <taxon>Murinae</taxon>
        <taxon>Mus</taxon>
        <taxon>Mus</taxon>
    </lineage>
</organism>
<proteinExistence type="evidence at transcript level"/>
<dbReference type="EMBL" id="AC154108">
    <property type="status" value="NOT_ANNOTATED_CDS"/>
    <property type="molecule type" value="Genomic_DNA"/>
</dbReference>
<dbReference type="EMBL" id="AK039193">
    <property type="protein sequence ID" value="BAC30273.1"/>
    <property type="molecule type" value="mRNA"/>
</dbReference>
<dbReference type="EMBL" id="BC116421">
    <property type="protein sequence ID" value="AAI16422.1"/>
    <property type="molecule type" value="mRNA"/>
</dbReference>
<dbReference type="EMBL" id="BC116422">
    <property type="protein sequence ID" value="AAI16423.1"/>
    <property type="molecule type" value="mRNA"/>
</dbReference>
<dbReference type="CCDS" id="CCDS52223.1"/>
<dbReference type="RefSeq" id="NP_001157990.1">
    <property type="nucleotide sequence ID" value="NM_001164518.2"/>
</dbReference>
<dbReference type="SMR" id="Q8HW98"/>
<dbReference type="FunCoup" id="Q8HW98">
    <property type="interactions" value="67"/>
</dbReference>
<dbReference type="IntAct" id="Q8HW98">
    <property type="interactions" value="1"/>
</dbReference>
<dbReference type="MINT" id="Q8HW98"/>
<dbReference type="STRING" id="10090.ENSMUSP00000103608"/>
<dbReference type="GlyConnect" id="2378">
    <property type="glycosylation" value="3 N-Linked glycans (2 sites)"/>
</dbReference>
<dbReference type="GlyCosmos" id="Q8HW98">
    <property type="glycosylation" value="6 sites, 3 glycans"/>
</dbReference>
<dbReference type="GlyGen" id="Q8HW98">
    <property type="glycosylation" value="6 sites, 7 N-linked glycans (4 sites)"/>
</dbReference>
<dbReference type="iPTMnet" id="Q8HW98"/>
<dbReference type="PhosphoSitePlus" id="Q8HW98"/>
<dbReference type="SwissPalm" id="Q8HW98"/>
<dbReference type="PaxDb" id="10090-ENSMUSP00000103608"/>
<dbReference type="PeptideAtlas" id="Q8HW98"/>
<dbReference type="ProteomicsDB" id="267296"/>
<dbReference type="Pumba" id="Q8HW98"/>
<dbReference type="Antibodypedia" id="49473">
    <property type="antibodies" value="23 antibodies from 11 providers"/>
</dbReference>
<dbReference type="Ensembl" id="ENSMUST00000107974.3">
    <property type="protein sequence ID" value="ENSMUSP00000103608.2"/>
    <property type="gene ID" value="ENSMUSG00000013367.6"/>
</dbReference>
<dbReference type="GeneID" id="210094"/>
<dbReference type="KEGG" id="mmu:210094"/>
<dbReference type="UCSC" id="uc009gmv.2">
    <property type="organism name" value="mouse"/>
</dbReference>
<dbReference type="AGR" id="MGI:2686277"/>
<dbReference type="CTD" id="402665"/>
<dbReference type="MGI" id="MGI:2686277">
    <property type="gene designation" value="Iglon5"/>
</dbReference>
<dbReference type="VEuPathDB" id="HostDB:ENSMUSG00000013367"/>
<dbReference type="eggNOG" id="KOG3510">
    <property type="taxonomic scope" value="Eukaryota"/>
</dbReference>
<dbReference type="GeneTree" id="ENSGT00940000160467"/>
<dbReference type="HOGENOM" id="CLU_027228_2_3_1"/>
<dbReference type="InParanoid" id="Q8HW98"/>
<dbReference type="OMA" id="GEAYGEQ"/>
<dbReference type="OrthoDB" id="6159398at2759"/>
<dbReference type="PhylomeDB" id="Q8HW98"/>
<dbReference type="TreeFam" id="TF325565"/>
<dbReference type="BioGRID-ORCS" id="210094">
    <property type="hits" value="3 hits in 78 CRISPR screens"/>
</dbReference>
<dbReference type="CD-CODE" id="CE726F99">
    <property type="entry name" value="Postsynaptic density"/>
</dbReference>
<dbReference type="PRO" id="PR:Q8HW98"/>
<dbReference type="Proteomes" id="UP000000589">
    <property type="component" value="Chromosome 7"/>
</dbReference>
<dbReference type="RNAct" id="Q8HW98">
    <property type="molecule type" value="protein"/>
</dbReference>
<dbReference type="Bgee" id="ENSMUSG00000013367">
    <property type="expression patterns" value="Expressed in embryonic brain and 84 other cell types or tissues"/>
</dbReference>
<dbReference type="ExpressionAtlas" id="Q8HW98">
    <property type="expression patterns" value="baseline and differential"/>
</dbReference>
<dbReference type="GO" id="GO:0005576">
    <property type="term" value="C:extracellular region"/>
    <property type="evidence" value="ECO:0007669"/>
    <property type="project" value="UniProtKB-SubCell"/>
</dbReference>
<dbReference type="GO" id="GO:0061744">
    <property type="term" value="P:motor behavior"/>
    <property type="evidence" value="ECO:0000315"/>
    <property type="project" value="MGI"/>
</dbReference>
<dbReference type="GO" id="GO:0050885">
    <property type="term" value="P:neuromuscular process controlling balance"/>
    <property type="evidence" value="ECO:0000315"/>
    <property type="project" value="MGI"/>
</dbReference>
<dbReference type="FunFam" id="2.60.40.10:FF:000013">
    <property type="entry name" value="cell adhesion molecule 1 isoform X1"/>
    <property type="match status" value="1"/>
</dbReference>
<dbReference type="FunFam" id="2.60.40.10:FF:000305">
    <property type="entry name" value="neurotrimin isoform X2"/>
    <property type="match status" value="1"/>
</dbReference>
<dbReference type="Gene3D" id="2.60.40.10">
    <property type="entry name" value="Immunoglobulins"/>
    <property type="match status" value="3"/>
</dbReference>
<dbReference type="InterPro" id="IPR007110">
    <property type="entry name" value="Ig-like_dom"/>
</dbReference>
<dbReference type="InterPro" id="IPR036179">
    <property type="entry name" value="Ig-like_dom_sf"/>
</dbReference>
<dbReference type="InterPro" id="IPR013783">
    <property type="entry name" value="Ig-like_fold"/>
</dbReference>
<dbReference type="InterPro" id="IPR003599">
    <property type="entry name" value="Ig_sub"/>
</dbReference>
<dbReference type="InterPro" id="IPR003598">
    <property type="entry name" value="Ig_sub2"/>
</dbReference>
<dbReference type="InterPro" id="IPR013106">
    <property type="entry name" value="Ig_V-set"/>
</dbReference>
<dbReference type="InterPro" id="IPR050876">
    <property type="entry name" value="IgLON_domain"/>
</dbReference>
<dbReference type="PANTHER" id="PTHR42757:SF12">
    <property type="entry name" value="IGLON FAMILY MEMBER 5"/>
    <property type="match status" value="1"/>
</dbReference>
<dbReference type="PANTHER" id="PTHR42757">
    <property type="entry name" value="IGLON FAMILY OF IMMUNOGLOBULIN SUPERFAMILY-RELATED"/>
    <property type="match status" value="1"/>
</dbReference>
<dbReference type="Pfam" id="PF13927">
    <property type="entry name" value="Ig_3"/>
    <property type="match status" value="2"/>
</dbReference>
<dbReference type="Pfam" id="PF07686">
    <property type="entry name" value="V-set"/>
    <property type="match status" value="1"/>
</dbReference>
<dbReference type="SMART" id="SM00409">
    <property type="entry name" value="IG"/>
    <property type="match status" value="3"/>
</dbReference>
<dbReference type="SMART" id="SM00408">
    <property type="entry name" value="IGc2"/>
    <property type="match status" value="3"/>
</dbReference>
<dbReference type="SUPFAM" id="SSF48726">
    <property type="entry name" value="Immunoglobulin"/>
    <property type="match status" value="3"/>
</dbReference>
<dbReference type="PROSITE" id="PS50835">
    <property type="entry name" value="IG_LIKE"/>
    <property type="match status" value="3"/>
</dbReference>
<feature type="signal peptide" evidence="1">
    <location>
        <begin position="1"/>
        <end position="30"/>
    </location>
</feature>
<feature type="chain" id="PRO_0000332302" description="IgLON family member 5">
    <location>
        <begin position="31"/>
        <end position="336"/>
    </location>
</feature>
<feature type="domain" description="Ig-like C2-type 1">
    <location>
        <begin position="33"/>
        <end position="122"/>
    </location>
</feature>
<feature type="domain" description="Ig-like C2-type 2">
    <location>
        <begin position="132"/>
        <end position="213"/>
    </location>
</feature>
<feature type="domain" description="Ig-like C2-type 3">
    <location>
        <begin position="218"/>
        <end position="307"/>
    </location>
</feature>
<feature type="glycosylation site" description="N-linked (GlcNAc...) asparagine" evidence="1">
    <location>
        <position position="41"/>
    </location>
</feature>
<feature type="glycosylation site" description="N-linked (GlcNAc...) asparagine" evidence="1">
    <location>
        <position position="49"/>
    </location>
</feature>
<feature type="glycosylation site" description="N-linked (GlcNAc...) asparagine" evidence="1">
    <location>
        <position position="67"/>
    </location>
</feature>
<feature type="glycosylation site" description="N-linked (GlcNAc...) asparagine" evidence="1">
    <location>
        <position position="137"/>
    </location>
</feature>
<feature type="glycosylation site" description="N-linked (GlcNAc...) asparagine" evidence="1">
    <location>
        <position position="288"/>
    </location>
</feature>
<feature type="disulfide bond" evidence="2">
    <location>
        <begin position="54"/>
        <end position="112"/>
    </location>
</feature>
<feature type="disulfide bond" evidence="2">
    <location>
        <begin position="154"/>
        <end position="195"/>
    </location>
</feature>
<feature type="disulfide bond" evidence="2">
    <location>
        <begin position="238"/>
        <end position="291"/>
    </location>
</feature>
<feature type="sequence conflict" description="In Ref. 2; BAC30273." evidence="3" ref="2">
    <original>L</original>
    <variation>V</variation>
    <location>
        <position position="12"/>
    </location>
</feature>
<feature type="sequence conflict" description="In Ref. 2; BAC30273." evidence="3" ref="2">
    <original>N</original>
    <variation>D</variation>
    <location>
        <position position="199"/>
    </location>
</feature>